<keyword id="KW-0030">Aminoacyl-tRNA synthetase</keyword>
<keyword id="KW-0067">ATP-binding</keyword>
<keyword id="KW-0963">Cytoplasm</keyword>
<keyword id="KW-0436">Ligase</keyword>
<keyword id="KW-0479">Metal-binding</keyword>
<keyword id="KW-0547">Nucleotide-binding</keyword>
<keyword id="KW-0648">Protein biosynthesis</keyword>
<keyword id="KW-0862">Zinc</keyword>
<comment type="function">
    <text evidence="1">Catalyzes the attachment of isoleucine to tRNA(Ile). As IleRS can inadvertently accommodate and process structurally similar amino acids such as valine, to avoid such errors it has two additional distinct tRNA(Ile)-dependent editing activities. One activity is designated as 'pretransfer' editing and involves the hydrolysis of activated Val-AMP. The other activity is designated 'posttransfer' editing and involves deacylation of mischarged Val-tRNA(Ile).</text>
</comment>
<comment type="catalytic activity">
    <reaction evidence="1">
        <text>tRNA(Ile) + L-isoleucine + ATP = L-isoleucyl-tRNA(Ile) + AMP + diphosphate</text>
        <dbReference type="Rhea" id="RHEA:11060"/>
        <dbReference type="Rhea" id="RHEA-COMP:9666"/>
        <dbReference type="Rhea" id="RHEA-COMP:9695"/>
        <dbReference type="ChEBI" id="CHEBI:30616"/>
        <dbReference type="ChEBI" id="CHEBI:33019"/>
        <dbReference type="ChEBI" id="CHEBI:58045"/>
        <dbReference type="ChEBI" id="CHEBI:78442"/>
        <dbReference type="ChEBI" id="CHEBI:78528"/>
        <dbReference type="ChEBI" id="CHEBI:456215"/>
        <dbReference type="EC" id="6.1.1.5"/>
    </reaction>
</comment>
<comment type="cofactor">
    <cofactor evidence="1">
        <name>Zn(2+)</name>
        <dbReference type="ChEBI" id="CHEBI:29105"/>
    </cofactor>
    <text evidence="1">Binds 1 zinc ion per subunit.</text>
</comment>
<comment type="subunit">
    <text evidence="1">Monomer.</text>
</comment>
<comment type="subcellular location">
    <subcellularLocation>
        <location evidence="1">Cytoplasm</location>
    </subcellularLocation>
</comment>
<comment type="domain">
    <text evidence="1">IleRS has two distinct active sites: one for aminoacylation and one for editing. The misactivated valine is translocated from the active site to the editing site, which sterically excludes the correctly activated isoleucine. The single editing site contains two valyl binding pockets, one specific for each substrate (Val-AMP or Val-tRNA(Ile)).</text>
</comment>
<comment type="similarity">
    <text evidence="1">Belongs to the class-I aminoacyl-tRNA synthetase family. IleS type 1 subfamily.</text>
</comment>
<organism>
    <name type="scientific">Caldicellulosiruptor bescii (strain ATCC BAA-1888 / DSM 6725 / KCTC 15123 / Z-1320)</name>
    <name type="common">Anaerocellum thermophilum</name>
    <dbReference type="NCBI Taxonomy" id="521460"/>
    <lineage>
        <taxon>Bacteria</taxon>
        <taxon>Bacillati</taxon>
        <taxon>Bacillota</taxon>
        <taxon>Bacillota incertae sedis</taxon>
        <taxon>Caldicellulosiruptorales</taxon>
        <taxon>Caldicellulosiruptoraceae</taxon>
        <taxon>Caldicellulosiruptor</taxon>
    </lineage>
</organism>
<accession>B9MRZ5</accession>
<reference key="1">
    <citation type="submission" date="2009-01" db="EMBL/GenBank/DDBJ databases">
        <title>Complete sequence of chromosome of Caldicellulosiruptor becscii DSM 6725.</title>
        <authorList>
            <person name="Lucas S."/>
            <person name="Copeland A."/>
            <person name="Lapidus A."/>
            <person name="Glavina del Rio T."/>
            <person name="Tice H."/>
            <person name="Bruce D."/>
            <person name="Goodwin L."/>
            <person name="Pitluck S."/>
            <person name="Sims D."/>
            <person name="Meincke L."/>
            <person name="Brettin T."/>
            <person name="Detter J.C."/>
            <person name="Han C."/>
            <person name="Larimer F."/>
            <person name="Land M."/>
            <person name="Hauser L."/>
            <person name="Kyrpides N."/>
            <person name="Ovchinnikova G."/>
            <person name="Kataeva I."/>
            <person name="Adams M.W.W."/>
        </authorList>
    </citation>
    <scope>NUCLEOTIDE SEQUENCE [LARGE SCALE GENOMIC DNA]</scope>
    <source>
        <strain>ATCC BAA-1888 / DSM 6725 / KCTC 15123 / Z-1320</strain>
    </source>
</reference>
<feature type="chain" id="PRO_1000189120" description="Isoleucine--tRNA ligase">
    <location>
        <begin position="1"/>
        <end position="920"/>
    </location>
</feature>
<feature type="short sequence motif" description="'HIGH' region">
    <location>
        <begin position="57"/>
        <end position="67"/>
    </location>
</feature>
<feature type="short sequence motif" description="'KMSKS' region">
    <location>
        <begin position="601"/>
        <end position="605"/>
    </location>
</feature>
<feature type="binding site" evidence="1">
    <location>
        <position position="560"/>
    </location>
    <ligand>
        <name>L-isoleucyl-5'-AMP</name>
        <dbReference type="ChEBI" id="CHEBI:178002"/>
    </ligand>
</feature>
<feature type="binding site" evidence="1">
    <location>
        <position position="604"/>
    </location>
    <ligand>
        <name>ATP</name>
        <dbReference type="ChEBI" id="CHEBI:30616"/>
    </ligand>
</feature>
<feature type="binding site" evidence="1">
    <location>
        <position position="890"/>
    </location>
    <ligand>
        <name>Zn(2+)</name>
        <dbReference type="ChEBI" id="CHEBI:29105"/>
    </ligand>
</feature>
<feature type="binding site" evidence="1">
    <location>
        <position position="893"/>
    </location>
    <ligand>
        <name>Zn(2+)</name>
        <dbReference type="ChEBI" id="CHEBI:29105"/>
    </ligand>
</feature>
<feature type="binding site" evidence="1">
    <location>
        <position position="910"/>
    </location>
    <ligand>
        <name>Zn(2+)</name>
        <dbReference type="ChEBI" id="CHEBI:29105"/>
    </ligand>
</feature>
<feature type="binding site" evidence="1">
    <location>
        <position position="913"/>
    </location>
    <ligand>
        <name>Zn(2+)</name>
        <dbReference type="ChEBI" id="CHEBI:29105"/>
    </ligand>
</feature>
<gene>
    <name evidence="1" type="primary">ileS</name>
    <name type="ordered locus">Athe_1349</name>
</gene>
<dbReference type="EC" id="6.1.1.5" evidence="1"/>
<dbReference type="EMBL" id="CP001393">
    <property type="protein sequence ID" value="ACM60449.1"/>
    <property type="molecule type" value="Genomic_DNA"/>
</dbReference>
<dbReference type="RefSeq" id="WP_015907819.1">
    <property type="nucleotide sequence ID" value="NC_012034.1"/>
</dbReference>
<dbReference type="SMR" id="B9MRZ5"/>
<dbReference type="STRING" id="521460.Athe_1349"/>
<dbReference type="GeneID" id="31772696"/>
<dbReference type="KEGG" id="ate:Athe_1349"/>
<dbReference type="eggNOG" id="COG0060">
    <property type="taxonomic scope" value="Bacteria"/>
</dbReference>
<dbReference type="HOGENOM" id="CLU_001493_7_0_9"/>
<dbReference type="Proteomes" id="UP000007723">
    <property type="component" value="Chromosome"/>
</dbReference>
<dbReference type="GO" id="GO:0005829">
    <property type="term" value="C:cytosol"/>
    <property type="evidence" value="ECO:0007669"/>
    <property type="project" value="TreeGrafter"/>
</dbReference>
<dbReference type="GO" id="GO:0002161">
    <property type="term" value="F:aminoacyl-tRNA deacylase activity"/>
    <property type="evidence" value="ECO:0007669"/>
    <property type="project" value="InterPro"/>
</dbReference>
<dbReference type="GO" id="GO:0005524">
    <property type="term" value="F:ATP binding"/>
    <property type="evidence" value="ECO:0007669"/>
    <property type="project" value="UniProtKB-UniRule"/>
</dbReference>
<dbReference type="GO" id="GO:0004822">
    <property type="term" value="F:isoleucine-tRNA ligase activity"/>
    <property type="evidence" value="ECO:0007669"/>
    <property type="project" value="UniProtKB-UniRule"/>
</dbReference>
<dbReference type="GO" id="GO:0000049">
    <property type="term" value="F:tRNA binding"/>
    <property type="evidence" value="ECO:0007669"/>
    <property type="project" value="InterPro"/>
</dbReference>
<dbReference type="GO" id="GO:0008270">
    <property type="term" value="F:zinc ion binding"/>
    <property type="evidence" value="ECO:0007669"/>
    <property type="project" value="UniProtKB-UniRule"/>
</dbReference>
<dbReference type="GO" id="GO:0006428">
    <property type="term" value="P:isoleucyl-tRNA aminoacylation"/>
    <property type="evidence" value="ECO:0007669"/>
    <property type="project" value="UniProtKB-UniRule"/>
</dbReference>
<dbReference type="CDD" id="cd07960">
    <property type="entry name" value="Anticodon_Ia_Ile_BEm"/>
    <property type="match status" value="1"/>
</dbReference>
<dbReference type="CDD" id="cd00818">
    <property type="entry name" value="IleRS_core"/>
    <property type="match status" value="1"/>
</dbReference>
<dbReference type="FunFam" id="1.10.730.20:FF:000001">
    <property type="entry name" value="Isoleucine--tRNA ligase"/>
    <property type="match status" value="1"/>
</dbReference>
<dbReference type="FunFam" id="3.40.50.620:FF:000152">
    <property type="entry name" value="Isoleucine--tRNA ligase"/>
    <property type="match status" value="1"/>
</dbReference>
<dbReference type="Gene3D" id="1.10.730.20">
    <property type="match status" value="1"/>
</dbReference>
<dbReference type="Gene3D" id="3.40.50.620">
    <property type="entry name" value="HUPs"/>
    <property type="match status" value="2"/>
</dbReference>
<dbReference type="Gene3D" id="1.10.10.830">
    <property type="entry name" value="Ile-tRNA synthetase CP2 domain-like"/>
    <property type="match status" value="1"/>
</dbReference>
<dbReference type="HAMAP" id="MF_02002">
    <property type="entry name" value="Ile_tRNA_synth_type1"/>
    <property type="match status" value="1"/>
</dbReference>
<dbReference type="InterPro" id="IPR001412">
    <property type="entry name" value="aa-tRNA-synth_I_CS"/>
</dbReference>
<dbReference type="InterPro" id="IPR002300">
    <property type="entry name" value="aa-tRNA-synth_Ia"/>
</dbReference>
<dbReference type="InterPro" id="IPR033708">
    <property type="entry name" value="Anticodon_Ile_BEm"/>
</dbReference>
<dbReference type="InterPro" id="IPR002301">
    <property type="entry name" value="Ile-tRNA-ligase"/>
</dbReference>
<dbReference type="InterPro" id="IPR023585">
    <property type="entry name" value="Ile-tRNA-ligase_type1"/>
</dbReference>
<dbReference type="InterPro" id="IPR050081">
    <property type="entry name" value="Ile-tRNA_ligase"/>
</dbReference>
<dbReference type="InterPro" id="IPR013155">
    <property type="entry name" value="M/V/L/I-tRNA-synth_anticd-bd"/>
</dbReference>
<dbReference type="InterPro" id="IPR014729">
    <property type="entry name" value="Rossmann-like_a/b/a_fold"/>
</dbReference>
<dbReference type="InterPro" id="IPR009080">
    <property type="entry name" value="tRNAsynth_Ia_anticodon-bd"/>
</dbReference>
<dbReference type="InterPro" id="IPR009008">
    <property type="entry name" value="Val/Leu/Ile-tRNA-synth_edit"/>
</dbReference>
<dbReference type="InterPro" id="IPR010663">
    <property type="entry name" value="Znf_FPG/IleRS"/>
</dbReference>
<dbReference type="NCBIfam" id="TIGR00392">
    <property type="entry name" value="ileS"/>
    <property type="match status" value="1"/>
</dbReference>
<dbReference type="PANTHER" id="PTHR42765:SF1">
    <property type="entry name" value="ISOLEUCINE--TRNA LIGASE, MITOCHONDRIAL"/>
    <property type="match status" value="1"/>
</dbReference>
<dbReference type="PANTHER" id="PTHR42765">
    <property type="entry name" value="SOLEUCYL-TRNA SYNTHETASE"/>
    <property type="match status" value="1"/>
</dbReference>
<dbReference type="Pfam" id="PF08264">
    <property type="entry name" value="Anticodon_1"/>
    <property type="match status" value="1"/>
</dbReference>
<dbReference type="Pfam" id="PF00133">
    <property type="entry name" value="tRNA-synt_1"/>
    <property type="match status" value="1"/>
</dbReference>
<dbReference type="Pfam" id="PF06827">
    <property type="entry name" value="zf-FPG_IleRS"/>
    <property type="match status" value="1"/>
</dbReference>
<dbReference type="PRINTS" id="PR00984">
    <property type="entry name" value="TRNASYNTHILE"/>
</dbReference>
<dbReference type="SUPFAM" id="SSF47323">
    <property type="entry name" value="Anticodon-binding domain of a subclass of class I aminoacyl-tRNA synthetases"/>
    <property type="match status" value="1"/>
</dbReference>
<dbReference type="SUPFAM" id="SSF52374">
    <property type="entry name" value="Nucleotidylyl transferase"/>
    <property type="match status" value="1"/>
</dbReference>
<dbReference type="SUPFAM" id="SSF50677">
    <property type="entry name" value="ValRS/IleRS/LeuRS editing domain"/>
    <property type="match status" value="1"/>
</dbReference>
<dbReference type="PROSITE" id="PS00178">
    <property type="entry name" value="AA_TRNA_LIGASE_I"/>
    <property type="match status" value="1"/>
</dbReference>
<sequence>MDWSQTLNLPKTDFPMRANLAQREPQFLKFWQENDIFKKMLEKNKNNKKFILHDGPPYANGDIHLGHALNKVLKDIVNKYKSLQGYYTPYIPGWDTHGLPIEQQVIKKLEVNRHEVDPVEFRKKCKEFALSYIDIQRQQFKRLGVFGEWENPYMTLDPKFEARQIRVFGEMAKKGYIYKGLKPVYWCPSCETALAEAEIEYQEDRTYSIYVKFEVIDDKGLFSNLPIGDKKVYIVIWTTTTWTLPGNLAIALNADFDYSLIDIGNEILVVASELVERVMKTNKIEQYKEIARFKGKDLEYVKCKHPFLDRTSLVILGEHVTLEAGTGCVHTAPGHGEEDFEVCQRYNIHVIVPVDNKGYLTKEAGKFAGLFYEDSNKEIAKELEASGHLLGVEKITHQYPHCWRCKNPVIFRATEQWFASVKGFRDQALKAVDDVKWVPEWGRDRIYNMIVDRQDWCISRQRIWGVPIPIFYCKNCRKELITDETIDYIAKIFEKEGSDAWFSKDVKELLPEGVKCPVCGCSEFEKETDIMDVWFDSGSSHAYVLESREDLEWPCDMYLEGNDQYRGWFQSSLLTAVATKGRAPYRIVLTHGFVVDGEGKKMSKSEGNVISPFDIINEFGADILRLWCVSADYTTDMRISKDIIKQLTEIYRKIRNTARFLLGNLYDFNPKTDKVGYENLKEIDKWALQRLYKLIEKVTKAYEEYDYNQVYHLVHNFCVIDMSNLYLDINKDRLYASKSESLDRRSAQTVMYEILIALTILIAPILSFTAEEIWQNIIFKEEDAESVFLTRWPSINEDILRDEALREKWDKIIEIKDIVSKQLEIARNEKLIGSSLDSKVKIFAKCDIKRFIEENKDIIQEVLIVSQLDVEESDSDQIKVEVYKADGSKCERCWKFDTMVGKNEESLNVCPRCYEVVKSK</sequence>
<protein>
    <recommendedName>
        <fullName evidence="1">Isoleucine--tRNA ligase</fullName>
        <ecNumber evidence="1">6.1.1.5</ecNumber>
    </recommendedName>
    <alternativeName>
        <fullName evidence="1">Isoleucyl-tRNA synthetase</fullName>
        <shortName evidence="1">IleRS</shortName>
    </alternativeName>
</protein>
<evidence type="ECO:0000255" key="1">
    <source>
        <dbReference type="HAMAP-Rule" id="MF_02002"/>
    </source>
</evidence>
<name>SYI_CALBD</name>
<proteinExistence type="inferred from homology"/>